<proteinExistence type="inferred from homology"/>
<reference key="1">
    <citation type="journal article" date="2009" name="J. Bacteriol.">
        <title>Genome sequence of Azotobacter vinelandii, an obligate aerobe specialized to support diverse anaerobic metabolic processes.</title>
        <authorList>
            <person name="Setubal J.C."/>
            <person name="Dos Santos P."/>
            <person name="Goldman B.S."/>
            <person name="Ertesvaag H."/>
            <person name="Espin G."/>
            <person name="Rubio L.M."/>
            <person name="Valla S."/>
            <person name="Almeida N.F."/>
            <person name="Balasubramanian D."/>
            <person name="Cromes L."/>
            <person name="Curatti L."/>
            <person name="Du Z."/>
            <person name="Godsy E."/>
            <person name="Goodner B."/>
            <person name="Hellner-Burris K."/>
            <person name="Hernandez J.A."/>
            <person name="Houmiel K."/>
            <person name="Imperial J."/>
            <person name="Kennedy C."/>
            <person name="Larson T.J."/>
            <person name="Latreille P."/>
            <person name="Ligon L.S."/>
            <person name="Lu J."/>
            <person name="Maerk M."/>
            <person name="Miller N.M."/>
            <person name="Norton S."/>
            <person name="O'Carroll I.P."/>
            <person name="Paulsen I."/>
            <person name="Raulfs E.C."/>
            <person name="Roemer R."/>
            <person name="Rosser J."/>
            <person name="Segura D."/>
            <person name="Slater S."/>
            <person name="Stricklin S.L."/>
            <person name="Studholme D.J."/>
            <person name="Sun J."/>
            <person name="Viana C.J."/>
            <person name="Wallin E."/>
            <person name="Wang B."/>
            <person name="Wheeler C."/>
            <person name="Zhu H."/>
            <person name="Dean D.R."/>
            <person name="Dixon R."/>
            <person name="Wood D."/>
        </authorList>
    </citation>
    <scope>NUCLEOTIDE SEQUENCE [LARGE SCALE GENOMIC DNA]</scope>
    <source>
        <strain>DJ / ATCC BAA-1303</strain>
    </source>
</reference>
<keyword id="KW-0031">Aminopeptidase</keyword>
<keyword id="KW-0378">Hydrolase</keyword>
<keyword id="KW-0479">Metal-binding</keyword>
<keyword id="KW-0482">Metalloprotease</keyword>
<keyword id="KW-0645">Protease</keyword>
<keyword id="KW-0862">Zinc</keyword>
<dbReference type="EC" id="3.4.11.-" evidence="1"/>
<dbReference type="EMBL" id="CP001157">
    <property type="protein sequence ID" value="ACO79664.1"/>
    <property type="molecule type" value="Genomic_DNA"/>
</dbReference>
<dbReference type="RefSeq" id="WP_012702044.1">
    <property type="nucleotide sequence ID" value="NC_012560.1"/>
</dbReference>
<dbReference type="SMR" id="C1DQM8"/>
<dbReference type="STRING" id="322710.Avin_35150"/>
<dbReference type="EnsemblBacteria" id="ACO79664">
    <property type="protein sequence ID" value="ACO79664"/>
    <property type="gene ID" value="Avin_35150"/>
</dbReference>
<dbReference type="GeneID" id="88186518"/>
<dbReference type="KEGG" id="avn:Avin_35150"/>
<dbReference type="eggNOG" id="COG1362">
    <property type="taxonomic scope" value="Bacteria"/>
</dbReference>
<dbReference type="HOGENOM" id="CLU_019532_2_0_6"/>
<dbReference type="OrthoDB" id="5288740at2"/>
<dbReference type="Proteomes" id="UP000002424">
    <property type="component" value="Chromosome"/>
</dbReference>
<dbReference type="GO" id="GO:0005737">
    <property type="term" value="C:cytoplasm"/>
    <property type="evidence" value="ECO:0007669"/>
    <property type="project" value="UniProtKB-ARBA"/>
</dbReference>
<dbReference type="GO" id="GO:0004177">
    <property type="term" value="F:aminopeptidase activity"/>
    <property type="evidence" value="ECO:0007669"/>
    <property type="project" value="UniProtKB-UniRule"/>
</dbReference>
<dbReference type="GO" id="GO:0008237">
    <property type="term" value="F:metallopeptidase activity"/>
    <property type="evidence" value="ECO:0007669"/>
    <property type="project" value="UniProtKB-UniRule"/>
</dbReference>
<dbReference type="GO" id="GO:0008270">
    <property type="term" value="F:zinc ion binding"/>
    <property type="evidence" value="ECO:0007669"/>
    <property type="project" value="UniProtKB-UniRule"/>
</dbReference>
<dbReference type="GO" id="GO:0006508">
    <property type="term" value="P:proteolysis"/>
    <property type="evidence" value="ECO:0007669"/>
    <property type="project" value="UniProtKB-UniRule"/>
</dbReference>
<dbReference type="CDD" id="cd05658">
    <property type="entry name" value="M18_DAP"/>
    <property type="match status" value="1"/>
</dbReference>
<dbReference type="FunFam" id="2.30.250.10:FF:000003">
    <property type="entry name" value="Probable M18 family aminopeptidase 2"/>
    <property type="match status" value="1"/>
</dbReference>
<dbReference type="Gene3D" id="2.30.250.10">
    <property type="entry name" value="Aminopeptidase i, Domain 2"/>
    <property type="match status" value="1"/>
</dbReference>
<dbReference type="Gene3D" id="3.40.630.10">
    <property type="entry name" value="Zn peptidases"/>
    <property type="match status" value="1"/>
</dbReference>
<dbReference type="HAMAP" id="MF_00467">
    <property type="entry name" value="Aminopeptidase_M18_2"/>
    <property type="match status" value="1"/>
</dbReference>
<dbReference type="InterPro" id="IPR022984">
    <property type="entry name" value="M18_aminopeptidase_2"/>
</dbReference>
<dbReference type="InterPro" id="IPR001948">
    <property type="entry name" value="Peptidase_M18"/>
</dbReference>
<dbReference type="InterPro" id="IPR023358">
    <property type="entry name" value="Peptidase_M18_dom2"/>
</dbReference>
<dbReference type="NCBIfam" id="NF002759">
    <property type="entry name" value="PRK02813.1"/>
    <property type="match status" value="1"/>
</dbReference>
<dbReference type="PANTHER" id="PTHR28570">
    <property type="entry name" value="ASPARTYL AMINOPEPTIDASE"/>
    <property type="match status" value="1"/>
</dbReference>
<dbReference type="PANTHER" id="PTHR28570:SF3">
    <property type="entry name" value="ASPARTYL AMINOPEPTIDASE"/>
    <property type="match status" value="1"/>
</dbReference>
<dbReference type="Pfam" id="PF02127">
    <property type="entry name" value="Peptidase_M18"/>
    <property type="match status" value="1"/>
</dbReference>
<dbReference type="PRINTS" id="PR00932">
    <property type="entry name" value="AMINO1PTASE"/>
</dbReference>
<dbReference type="SUPFAM" id="SSF101821">
    <property type="entry name" value="Aminopeptidase/glucanase lid domain"/>
    <property type="match status" value="1"/>
</dbReference>
<dbReference type="SUPFAM" id="SSF53187">
    <property type="entry name" value="Zn-dependent exopeptidases"/>
    <property type="match status" value="1"/>
</dbReference>
<organism>
    <name type="scientific">Azotobacter vinelandii (strain DJ / ATCC BAA-1303)</name>
    <dbReference type="NCBI Taxonomy" id="322710"/>
    <lineage>
        <taxon>Bacteria</taxon>
        <taxon>Pseudomonadati</taxon>
        <taxon>Pseudomonadota</taxon>
        <taxon>Gammaproteobacteria</taxon>
        <taxon>Pseudomonadales</taxon>
        <taxon>Pseudomonadaceae</taxon>
        <taxon>Azotobacter</taxon>
    </lineage>
</organism>
<evidence type="ECO:0000255" key="1">
    <source>
        <dbReference type="HAMAP-Rule" id="MF_00467"/>
    </source>
</evidence>
<protein>
    <recommendedName>
        <fullName evidence="1">Probable M18 family aminopeptidase 2</fullName>
        <ecNumber evidence="1">3.4.11.-</ecNumber>
    </recommendedName>
</protein>
<name>APEB_AZOVD</name>
<accession>C1DQM8</accession>
<comment type="cofactor">
    <cofactor evidence="1">
        <name>Zn(2+)</name>
        <dbReference type="ChEBI" id="CHEBI:29105"/>
    </cofactor>
</comment>
<comment type="similarity">
    <text evidence="1">Belongs to the peptidase M18 family.</text>
</comment>
<gene>
    <name evidence="1" type="primary">apeB</name>
    <name type="ordered locus">Avin_35150</name>
</gene>
<sequence>MRTELNQGLIDFLKASPTPFHACASLAQRLESAGYQRLDEREPWPTQSGGRYYVTRNDSSLIAIQLGRRSPLEGGLRLVGAHTDSPCLRVKPQPELNRQGFWQLGVEVYGGALLAPWFDRDLSLAGRVTFRRAGRVESQLIDFKQPIAVIPNLAIHLNREANQGWAINAQNELPPILAQVAGDERGDFRALLAEQLQREHEINADVVLDFELCFYDTQSAALIGLNQDFIAGARLDNLLSCHAGLQALLAAGDRESCVLVCTDHEEIGSCSTCGADGPFLEQVLGRLLPDGDAFVRIMQQSLLVSADNAHGVHPNYADRHDANHGPKLNAGPVIKVNSNQRYATNSETAGFFRHLCFDVEVPVQSFVVRSDMGCGSTIGPITASRLGMRTVDIGLPTFAMHSIRELAGSHDLTHLVKVLTAFYSSPLLP</sequence>
<feature type="chain" id="PRO_1000206330" description="Probable M18 family aminopeptidase 2">
    <location>
        <begin position="1"/>
        <end position="429"/>
    </location>
</feature>
<feature type="binding site" evidence="1">
    <location>
        <position position="82"/>
    </location>
    <ligand>
        <name>Zn(2+)</name>
        <dbReference type="ChEBI" id="CHEBI:29105"/>
    </ligand>
</feature>
<feature type="binding site" evidence="1">
    <location>
        <position position="156"/>
    </location>
    <ligand>
        <name>Zn(2+)</name>
        <dbReference type="ChEBI" id="CHEBI:29105"/>
    </ligand>
</feature>
<feature type="binding site" evidence="1">
    <location>
        <position position="401"/>
    </location>
    <ligand>
        <name>Zn(2+)</name>
        <dbReference type="ChEBI" id="CHEBI:29105"/>
    </ligand>
</feature>